<comment type="function">
    <text evidence="1">Catalyzes the hydrolysis of complex carboxylic polyesters found in the cell wall of plants (By similarity). Degrades cutin, a macromolecule that forms the structure of the plant cuticle (By similarity).</text>
</comment>
<comment type="catalytic activity">
    <reaction evidence="5 6">
        <text>cutin + H2O = cutin monomers.</text>
        <dbReference type="EC" id="3.1.1.74"/>
    </reaction>
</comment>
<comment type="subcellular location">
    <subcellularLocation>
        <location evidence="2">Secreted</location>
    </subcellularLocation>
</comment>
<comment type="similarity">
    <text evidence="7">Belongs to the cutinase family.</text>
</comment>
<sequence length="215" mass="22341">MNLRLLTLALAGLAAASPVAIQERQFSSGNELRDGACKPITFIFARASTEPGLLGMSTGPAVCNNLKAAKPGQVACQGVGPAYTADLGSNALPENTSPAAINEAVDLFKQAASKCPDTQIVAGGYSQGTAVMDGSIKRLPDEVKEKIKGVVLFGYTRNAQERGQIANFPKDKVKIYCAMGDLVCDGTLIVTAAHFTYGANTGDAARFLLGKLSTA</sequence>
<accession>A1CVT3</accession>
<name>CUTI2_NEOFI</name>
<protein>
    <recommendedName>
        <fullName>Probable cutinase 2</fullName>
        <ecNumber evidence="5 6">3.1.1.74</ecNumber>
    </recommendedName>
    <alternativeName>
        <fullName>Cutin hydrolase 2</fullName>
    </alternativeName>
</protein>
<gene>
    <name type="ORF">NFIA_102190</name>
</gene>
<feature type="signal peptide" evidence="4">
    <location>
        <begin position="1"/>
        <end position="16"/>
    </location>
</feature>
<feature type="chain" id="PRO_0000395264" description="Probable cutinase 2">
    <location>
        <begin position="17"/>
        <end position="215"/>
    </location>
</feature>
<feature type="active site" description="Nucleophile" evidence="1">
    <location>
        <position position="126"/>
    </location>
</feature>
<feature type="active site" evidence="1">
    <location>
        <position position="181"/>
    </location>
</feature>
<feature type="active site" description="Proton donor/acceptor" evidence="1">
    <location>
        <position position="194"/>
    </location>
</feature>
<feature type="site" description="Transition state stabilizer" evidence="1">
    <location>
        <position position="48"/>
    </location>
</feature>
<feature type="site" description="Transition state stabilizer" evidence="1">
    <location>
        <position position="127"/>
    </location>
</feature>
<feature type="disulfide bond" evidence="3">
    <location>
        <begin position="37"/>
        <end position="115"/>
    </location>
</feature>
<feature type="disulfide bond" evidence="3">
    <location>
        <begin position="63"/>
        <end position="76"/>
    </location>
</feature>
<feature type="disulfide bond" evidence="3">
    <location>
        <begin position="177"/>
        <end position="184"/>
    </location>
</feature>
<organism>
    <name type="scientific">Neosartorya fischeri (strain ATCC 1020 / DSM 3700 / CBS 544.65 / FGSC A1164 / JCM 1740 / NRRL 181 / WB 181)</name>
    <name type="common">Aspergillus fischerianus</name>
    <dbReference type="NCBI Taxonomy" id="331117"/>
    <lineage>
        <taxon>Eukaryota</taxon>
        <taxon>Fungi</taxon>
        <taxon>Dikarya</taxon>
        <taxon>Ascomycota</taxon>
        <taxon>Pezizomycotina</taxon>
        <taxon>Eurotiomycetes</taxon>
        <taxon>Eurotiomycetidae</taxon>
        <taxon>Eurotiales</taxon>
        <taxon>Aspergillaceae</taxon>
        <taxon>Aspergillus</taxon>
        <taxon>Aspergillus subgen. Fumigati</taxon>
    </lineage>
</organism>
<evidence type="ECO:0000250" key="1">
    <source>
        <dbReference type="UniProtKB" id="P00590"/>
    </source>
</evidence>
<evidence type="ECO:0000250" key="2">
    <source>
        <dbReference type="UniProtKB" id="P11373"/>
    </source>
</evidence>
<evidence type="ECO:0000250" key="3">
    <source>
        <dbReference type="UniProtKB" id="P52956"/>
    </source>
</evidence>
<evidence type="ECO:0000255" key="4"/>
<evidence type="ECO:0000255" key="5">
    <source>
        <dbReference type="PROSITE-ProRule" id="PRU10108"/>
    </source>
</evidence>
<evidence type="ECO:0000255" key="6">
    <source>
        <dbReference type="PROSITE-ProRule" id="PRU10109"/>
    </source>
</evidence>
<evidence type="ECO:0000305" key="7"/>
<dbReference type="EC" id="3.1.1.74" evidence="5 6"/>
<dbReference type="EMBL" id="DS027685">
    <property type="protein sequence ID" value="EAW24735.1"/>
    <property type="molecule type" value="Genomic_DNA"/>
</dbReference>
<dbReference type="RefSeq" id="XP_001266632.1">
    <property type="nucleotide sequence ID" value="XM_001266631.1"/>
</dbReference>
<dbReference type="SMR" id="A1CVT3"/>
<dbReference type="ESTHER" id="aspfu-q4wqv2">
    <property type="family name" value="Cutinase"/>
</dbReference>
<dbReference type="EnsemblFungi" id="EAW24735">
    <property type="protein sequence ID" value="EAW24735"/>
    <property type="gene ID" value="NFIA_102190"/>
</dbReference>
<dbReference type="GeneID" id="4594057"/>
<dbReference type="KEGG" id="nfi:NFIA_102190"/>
<dbReference type="VEuPathDB" id="FungiDB:NFIA_102190"/>
<dbReference type="eggNOG" id="ENOG502SI38">
    <property type="taxonomic scope" value="Eukaryota"/>
</dbReference>
<dbReference type="HOGENOM" id="CLU_040058_2_0_1"/>
<dbReference type="OMA" id="ACKPITF"/>
<dbReference type="OrthoDB" id="3225429at2759"/>
<dbReference type="Proteomes" id="UP000006702">
    <property type="component" value="Unassembled WGS sequence"/>
</dbReference>
<dbReference type="GO" id="GO:0005576">
    <property type="term" value="C:extracellular region"/>
    <property type="evidence" value="ECO:0007669"/>
    <property type="project" value="UniProtKB-SubCell"/>
</dbReference>
<dbReference type="GO" id="GO:0050525">
    <property type="term" value="F:cutinase activity"/>
    <property type="evidence" value="ECO:0000250"/>
    <property type="project" value="UniProtKB"/>
</dbReference>
<dbReference type="GO" id="GO:0016052">
    <property type="term" value="P:carbohydrate catabolic process"/>
    <property type="evidence" value="ECO:0007669"/>
    <property type="project" value="TreeGrafter"/>
</dbReference>
<dbReference type="FunFam" id="3.40.50.1820:FF:000235">
    <property type="entry name" value="Cutinase 1"/>
    <property type="match status" value="1"/>
</dbReference>
<dbReference type="Gene3D" id="3.40.50.1820">
    <property type="entry name" value="alpha/beta hydrolase"/>
    <property type="match status" value="1"/>
</dbReference>
<dbReference type="InterPro" id="IPR029058">
    <property type="entry name" value="AB_hydrolase_fold"/>
</dbReference>
<dbReference type="InterPro" id="IPR000675">
    <property type="entry name" value="Cutinase/axe"/>
</dbReference>
<dbReference type="InterPro" id="IPR043580">
    <property type="entry name" value="CUTINASE_1"/>
</dbReference>
<dbReference type="InterPro" id="IPR043579">
    <property type="entry name" value="CUTINASE_2"/>
</dbReference>
<dbReference type="InterPro" id="IPR011150">
    <property type="entry name" value="Cutinase_monf"/>
</dbReference>
<dbReference type="PANTHER" id="PTHR48250:SF3">
    <property type="entry name" value="CUTINASE 1-RELATED"/>
    <property type="match status" value="1"/>
</dbReference>
<dbReference type="PANTHER" id="PTHR48250">
    <property type="entry name" value="CUTINASE 2-RELATED"/>
    <property type="match status" value="1"/>
</dbReference>
<dbReference type="Pfam" id="PF01083">
    <property type="entry name" value="Cutinase"/>
    <property type="match status" value="1"/>
</dbReference>
<dbReference type="PRINTS" id="PR00129">
    <property type="entry name" value="CUTINASE"/>
</dbReference>
<dbReference type="SMART" id="SM01110">
    <property type="entry name" value="Cutinase"/>
    <property type="match status" value="1"/>
</dbReference>
<dbReference type="SUPFAM" id="SSF53474">
    <property type="entry name" value="alpha/beta-Hydrolases"/>
    <property type="match status" value="1"/>
</dbReference>
<dbReference type="PROSITE" id="PS00155">
    <property type="entry name" value="CUTINASE_1"/>
    <property type="match status" value="1"/>
</dbReference>
<dbReference type="PROSITE" id="PS00931">
    <property type="entry name" value="CUTINASE_2"/>
    <property type="match status" value="1"/>
</dbReference>
<proteinExistence type="inferred from homology"/>
<reference key="1">
    <citation type="journal article" date="2008" name="PLoS Genet.">
        <title>Genomic islands in the pathogenic filamentous fungus Aspergillus fumigatus.</title>
        <authorList>
            <person name="Fedorova N.D."/>
            <person name="Khaldi N."/>
            <person name="Joardar V.S."/>
            <person name="Maiti R."/>
            <person name="Amedeo P."/>
            <person name="Anderson M.J."/>
            <person name="Crabtree J."/>
            <person name="Silva J.C."/>
            <person name="Badger J.H."/>
            <person name="Albarraq A."/>
            <person name="Angiuoli S."/>
            <person name="Bussey H."/>
            <person name="Bowyer P."/>
            <person name="Cotty P.J."/>
            <person name="Dyer P.S."/>
            <person name="Egan A."/>
            <person name="Galens K."/>
            <person name="Fraser-Liggett C.M."/>
            <person name="Haas B.J."/>
            <person name="Inman J.M."/>
            <person name="Kent R."/>
            <person name="Lemieux S."/>
            <person name="Malavazi I."/>
            <person name="Orvis J."/>
            <person name="Roemer T."/>
            <person name="Ronning C.M."/>
            <person name="Sundaram J.P."/>
            <person name="Sutton G."/>
            <person name="Turner G."/>
            <person name="Venter J.C."/>
            <person name="White O.R."/>
            <person name="Whitty B.R."/>
            <person name="Youngman P."/>
            <person name="Wolfe K.H."/>
            <person name="Goldman G.H."/>
            <person name="Wortman J.R."/>
            <person name="Jiang B."/>
            <person name="Denning D.W."/>
            <person name="Nierman W.C."/>
        </authorList>
    </citation>
    <scope>NUCLEOTIDE SEQUENCE [LARGE SCALE GENOMIC DNA]</scope>
    <source>
        <strain>ATCC 1020 / DSM 3700 / CBS 544.65 / FGSC A1164 / JCM 1740 / NRRL 181 / WB 181</strain>
    </source>
</reference>
<keyword id="KW-1015">Disulfide bond</keyword>
<keyword id="KW-0378">Hydrolase</keyword>
<keyword id="KW-1185">Reference proteome</keyword>
<keyword id="KW-0964">Secreted</keyword>
<keyword id="KW-0719">Serine esterase</keyword>
<keyword id="KW-0732">Signal</keyword>